<keyword id="KW-0002">3D-structure</keyword>
<keyword id="KW-0204">Cytolysis</keyword>
<keyword id="KW-1015">Disulfide bond</keyword>
<keyword id="KW-0238">DNA-binding</keyword>
<keyword id="KW-0578">Host cell lysis by virus</keyword>
<keyword id="KW-1049">Host periplasm</keyword>
<keyword id="KW-1185">Reference proteome</keyword>
<keyword id="KW-0732">Signal</keyword>
<keyword id="KW-1188">Viral release from host cell</keyword>
<reference key="1">
    <citation type="journal article" date="1986" name="Nucleic Acids Res.">
        <title>Nucleotide sequence and analysis of the 58.3 to 65.5-kb early region of bacteriophage T4.</title>
        <authorList>
            <person name="Valerie K."/>
            <person name="Stevens J."/>
            <person name="Lynch M."/>
            <person name="Henderson E.E."/>
            <person name="de Riel J.K."/>
        </authorList>
    </citation>
    <scope>NUCLEOTIDE SEQUENCE [GENOMIC DNA]</scope>
</reference>
<reference key="2">
    <citation type="submission" date="1996-11" db="EMBL/GenBank/DDBJ databases">
        <title>The 10.7 kb 'nonessential' region of bacteriophage T4 between the genes tk and nrdC: twenty new t4 genes, generally conserved among T-even phages.</title>
        <authorList>
            <person name="Mzhavia N."/>
            <person name="Marusich E."/>
            <person name="Djavakhishvili T."/>
            <person name="Neitzel J."/>
            <person name="Peterson S."/>
            <person name="Awaya M."/>
            <person name="Eidermiller J."/>
            <person name="Canada D."/>
            <person name="Tracy J."/>
            <person name="Gailbreath K."/>
            <person name="Paddison P."/>
            <person name="Anderson B."/>
            <person name="Stidham T."/>
            <person name="Blattner F."/>
            <person name="Kutter E.M."/>
        </authorList>
    </citation>
    <scope>NUCLEOTIDE SEQUENCE [GENOMIC DNA]</scope>
</reference>
<reference key="3">
    <citation type="journal article" date="2003" name="Microbiol. Mol. Biol. Rev.">
        <title>Bacteriophage T4 genome.</title>
        <authorList>
            <person name="Miller E.S."/>
            <person name="Kutter E."/>
            <person name="Mosig G."/>
            <person name="Arisaka F."/>
            <person name="Kunisawa T."/>
            <person name="Ruger W."/>
        </authorList>
    </citation>
    <scope>NUCLEOTIDE SEQUENCE [LARGE SCALE GENOMIC DNA]</scope>
</reference>
<reference key="4">
    <citation type="journal article" date="1998" name="Genetics">
        <title>The roles of the bacteriophage T4 r genes in lysis inhibition and fine-structure genetics: a new perspective.</title>
        <authorList>
            <person name="Paddison P."/>
            <person name="Abedon S.T."/>
            <person name="Dressman H.K."/>
            <person name="Gailbreath K."/>
            <person name="Tracy J."/>
            <person name="Mosser E."/>
            <person name="Neitzel J."/>
            <person name="Guttman B."/>
            <person name="Kutter E."/>
        </authorList>
    </citation>
    <scope>FUNCTION</scope>
</reference>
<reference key="5">
    <citation type="journal article" date="2005" name="J. Bacteriol.">
        <title>Periplasmic domains define holin-antiholin interactions in t4 lysis inhibition.</title>
        <authorList>
            <person name="Tran T.A."/>
            <person name="Struck D.K."/>
            <person name="Young R."/>
        </authorList>
    </citation>
    <scope>INTERACTION WITH HOLIN</scope>
    <scope>TOPOLOGY</scope>
    <scope>SUBCELLULAR LOCATION</scope>
</reference>
<reference key="6">
    <citation type="journal article" date="2007" name="J. Bacteriol.">
        <title>The T4 RI antiholin has an N-terminal signal anchor release domain that targets it for degradation by DegP.</title>
        <authorList>
            <person name="Tran T.A."/>
            <person name="Struck D.K."/>
            <person name="Young R."/>
        </authorList>
    </citation>
    <scope>FUNCTION</scope>
</reference>
<reference key="7">
    <citation type="journal article" date="2012" name="Protein Sci.">
        <title>Protein determinants of phage T4 lysis inhibition.</title>
        <authorList>
            <person name="Moussa S.H."/>
            <person name="Kuznetsov V."/>
            <person name="Tran T.A."/>
            <person name="Sacchettini J.C."/>
            <person name="Young R."/>
        </authorList>
    </citation>
    <scope>FUNCTION</scope>
    <scope>MUTAGENESIS OF CYS-69 AND CYS-75</scope>
    <scope>DISULFIDE BOND</scope>
    <scope>TOPOLOGY</scope>
    <scope>DOMAIN</scope>
</reference>
<reference key="8">
    <citation type="journal article" date="2021" name="Front. Microbiol.">
        <title>The Phage T4 Antiholin RI Has a Cleavable Signal Peptide, Not a SAR Domain.</title>
        <authorList>
            <person name="Mehner-Breitfeld D."/>
            <person name="Schwarzkopf J.M.F."/>
            <person name="Young R."/>
            <person name="Kondabagil K."/>
            <person name="Brueser T."/>
        </authorList>
    </citation>
    <scope>SIGNAL SEQUENCE</scope>
    <scope>SUBCELLULAR LOCATION</scope>
    <scope>MUTAGENESIS OF ALA-24</scope>
    <scope>FUNCTION</scope>
</reference>
<reference evidence="9 10 11 12" key="9">
    <citation type="journal article" date="2020" name="J. Mol. Biol.">
        <title>The Structural Basis of T4 Phage Lysis Control: DNA as the Signal for Lysis Inhibition.</title>
        <authorList>
            <person name="Krieger I.V."/>
            <person name="Kuznetsov V."/>
            <person name="Chang J.Y."/>
            <person name="Zhang J."/>
            <person name="Moussa S.H."/>
            <person name="Young R.F."/>
            <person name="Sacchettini J.C."/>
        </authorList>
    </citation>
    <scope>X-RAY CRYSTALLOGRAPHY (1.65 ANGSTROMS) OF 25-97 IN COMPLEX WITH HOLIN</scope>
    <scope>SUBUNIT</scope>
    <scope>FUNCTION</scope>
</reference>
<evidence type="ECO:0000255" key="1">
    <source>
        <dbReference type="HAMAP-Rule" id="MF_04105"/>
    </source>
</evidence>
<evidence type="ECO:0000269" key="2">
    <source>
    </source>
</evidence>
<evidence type="ECO:0000269" key="3">
    <source>
    </source>
</evidence>
<evidence type="ECO:0000269" key="4">
    <source>
    </source>
</evidence>
<evidence type="ECO:0000269" key="5">
    <source>
    </source>
</evidence>
<evidence type="ECO:0000269" key="6">
    <source>
    </source>
</evidence>
<evidence type="ECO:0000269" key="7">
    <source>
    </source>
</evidence>
<evidence type="ECO:0000305" key="8">
    <source>
    </source>
</evidence>
<evidence type="ECO:0007744" key="9">
    <source>
        <dbReference type="PDB" id="6PSH"/>
    </source>
</evidence>
<evidence type="ECO:0007744" key="10">
    <source>
        <dbReference type="PDB" id="6PSK"/>
    </source>
</evidence>
<evidence type="ECO:0007744" key="11">
    <source>
        <dbReference type="PDB" id="6PX4"/>
    </source>
</evidence>
<evidence type="ECO:0007744" key="12">
    <source>
        <dbReference type="PDB" id="6PXE"/>
    </source>
</evidence>
<evidence type="ECO:0007829" key="13">
    <source>
        <dbReference type="PDB" id="6PX4"/>
    </source>
</evidence>
<gene>
    <name type="primary">rI</name>
    <name type="synonym">58.6</name>
    <name type="synonym">rIA</name>
    <name type="synonym">tk.-2</name>
</gene>
<comment type="function">
    <text evidence="1 3 4 5 6 7">Involved in lysis inhibition. Senses superinfections and inhibits the holin, thereby delaying the host cell lysis timing. The genomic DNA from the superinfecting phage bound to the complex holin-antiholin probably serves as a signal for the lysis inhibition and blocks the holin multimerization.</text>
</comment>
<comment type="subunit">
    <text evidence="1 2 5">Homotetramer; in free-form (PubMed:32562709). Homomultimer. Heterotetramer composed of 2 holin and 2 antiholin (PubMed:32562709). The holin-antiholin complex binds dsDNA (PubMed:32562709). Interacts (via C-terminus) with holin (via C-terminus); this interaction blocks the holin homomultimerization and delays the host cell lysis (By similarity) (PubMed:16166524).</text>
</comment>
<comment type="subcellular location">
    <subcellularLocation>
        <location evidence="1 6">Host periplasm</location>
    </subcellularLocation>
</comment>
<comment type="PTM">
    <text evidence="1 4">Disulfide bond is required for functionality.</text>
</comment>
<comment type="similarity">
    <text evidence="1">Belongs to the T4likevirus antiholin family.</text>
</comment>
<comment type="caution">
    <text evidence="6">It was first thought (PubMed:17693511) that the antiholin possesses a SAR domain, but it undergoes normal processing of its N-terminal signal sequence.</text>
</comment>
<accession>P13304</accession>
<organism>
    <name type="scientific">Enterobacteria phage T4</name>
    <name type="common">Bacteriophage T4</name>
    <dbReference type="NCBI Taxonomy" id="10665"/>
    <lineage>
        <taxon>Viruses</taxon>
        <taxon>Duplodnaviria</taxon>
        <taxon>Heunggongvirae</taxon>
        <taxon>Uroviricota</taxon>
        <taxon>Caudoviricetes</taxon>
        <taxon>Straboviridae</taxon>
        <taxon>Tevenvirinae</taxon>
        <taxon>Tequatrovirus</taxon>
    </lineage>
</organism>
<feature type="signal peptide" evidence="1 6">
    <location>
        <begin position="1"/>
        <end position="24"/>
    </location>
</feature>
<feature type="chain" id="PRO_0000003346" description="Antiholin" evidence="1">
    <location>
        <begin position="25"/>
        <end position="97"/>
    </location>
</feature>
<feature type="disulfide bond" evidence="1 8">
    <location>
        <begin position="69"/>
        <end position="75"/>
    </location>
</feature>
<feature type="mutagenesis site" description="Complete loss of processing of signal sequence." evidence="6">
    <original>A</original>
    <variation>P</variation>
    <location>
        <position position="24"/>
    </location>
</feature>
<feature type="mutagenesis site" description="Complete loss of lysis." evidence="4">
    <original>C</original>
    <variation>S</variation>
    <location>
        <position position="69"/>
    </location>
</feature>
<feature type="mutagenesis site" description="Complete loss of lysis." evidence="4">
    <original>C</original>
    <variation>S</variation>
    <location>
        <position position="75"/>
    </location>
</feature>
<feature type="helix" evidence="13">
    <location>
        <begin position="28"/>
        <end position="40"/>
    </location>
</feature>
<feature type="helix" evidence="13">
    <location>
        <begin position="42"/>
        <end position="44"/>
    </location>
</feature>
<feature type="strand" evidence="13">
    <location>
        <begin position="45"/>
        <end position="47"/>
    </location>
</feature>
<feature type="helix" evidence="13">
    <location>
        <begin position="50"/>
        <end position="66"/>
    </location>
</feature>
<feature type="helix" evidence="13">
    <location>
        <begin position="72"/>
        <end position="89"/>
    </location>
</feature>
<dbReference type="EMBL" id="X04567">
    <property type="protein sequence ID" value="CAA28236.1"/>
    <property type="molecule type" value="Genomic_DNA"/>
</dbReference>
<dbReference type="EMBL" id="U76612">
    <property type="protein sequence ID" value="AAB26962.1"/>
    <property type="molecule type" value="Genomic_DNA"/>
</dbReference>
<dbReference type="EMBL" id="AF158101">
    <property type="protein sequence ID" value="AAD42646.1"/>
    <property type="molecule type" value="Genomic_DNA"/>
</dbReference>
<dbReference type="RefSeq" id="NP_049717.1">
    <property type="nucleotide sequence ID" value="NC_000866.4"/>
</dbReference>
<dbReference type="PDB" id="6PSH">
    <property type="method" value="X-ray"/>
    <property type="resolution" value="2.21 A"/>
    <property type="chains" value="A=25-97"/>
</dbReference>
<dbReference type="PDB" id="6PSK">
    <property type="method" value="X-ray"/>
    <property type="resolution" value="2.20 A"/>
    <property type="chains" value="R=25-97"/>
</dbReference>
<dbReference type="PDB" id="6PX4">
    <property type="method" value="X-ray"/>
    <property type="resolution" value="1.65 A"/>
    <property type="chains" value="A/R=25-97"/>
</dbReference>
<dbReference type="PDB" id="6PXE">
    <property type="method" value="X-ray"/>
    <property type="resolution" value="2.30 A"/>
    <property type="chains" value="A/C/E/R=25-97"/>
</dbReference>
<dbReference type="PDBsum" id="6PSH"/>
<dbReference type="PDBsum" id="6PSK"/>
<dbReference type="PDBsum" id="6PX4"/>
<dbReference type="PDBsum" id="6PXE"/>
<dbReference type="SMR" id="P13304"/>
<dbReference type="GeneID" id="1258591"/>
<dbReference type="KEGG" id="vg:1258591"/>
<dbReference type="OrthoDB" id="17415at10239"/>
<dbReference type="Proteomes" id="UP000009087">
    <property type="component" value="Segment"/>
</dbReference>
<dbReference type="GO" id="GO:0044229">
    <property type="term" value="C:host cell periplasmic space"/>
    <property type="evidence" value="ECO:0007669"/>
    <property type="project" value="UniProtKB-SubCell"/>
</dbReference>
<dbReference type="GO" id="GO:0020002">
    <property type="term" value="C:host cell plasma membrane"/>
    <property type="evidence" value="ECO:0000314"/>
    <property type="project" value="CACAO"/>
</dbReference>
<dbReference type="GO" id="GO:0003677">
    <property type="term" value="F:DNA binding"/>
    <property type="evidence" value="ECO:0007669"/>
    <property type="project" value="UniProtKB-KW"/>
</dbReference>
<dbReference type="GO" id="GO:0140678">
    <property type="term" value="F:molecular function inhibitor activity"/>
    <property type="evidence" value="ECO:0007669"/>
    <property type="project" value="UniProtKB-UniRule"/>
</dbReference>
<dbReference type="GO" id="GO:0031640">
    <property type="term" value="P:killing of cells of another organism"/>
    <property type="evidence" value="ECO:0007669"/>
    <property type="project" value="UniProtKB-KW"/>
</dbReference>
<dbReference type="HAMAP" id="MF_04105">
    <property type="entry name" value="ANTIH_T4"/>
    <property type="match status" value="1"/>
</dbReference>
<dbReference type="InterPro" id="IPR034696">
    <property type="entry name" value="RI_T4"/>
</dbReference>
<dbReference type="Pfam" id="PF24205">
    <property type="entry name" value="Antiholin"/>
    <property type="match status" value="1"/>
</dbReference>
<proteinExistence type="evidence at protein level"/>
<sequence>MALKATALFAMLGLSFVLSPSIEANVDPHFDKFMESGIRHVYMLFENKSVESSEQFYSFMRTTYKNDPCSSDFECIERGAEMAQSYARIMNIKLETE</sequence>
<organismHost>
    <name type="scientific">Escherichia coli</name>
    <dbReference type="NCBI Taxonomy" id="562"/>
</organismHost>
<name>ANTIH_BPT4</name>
<protein>
    <recommendedName>
        <fullName evidence="1">Antiholin</fullName>
    </recommendedName>
    <alternativeName>
        <fullName>Protein rI</fullName>
    </alternativeName>
</protein>